<name>DAZLB_XENLA</name>
<gene>
    <name type="primary">dazl-b</name>
</gene>
<accession>Q4V7Y4</accession>
<accession>Q6IR77</accession>
<organism>
    <name type="scientific">Xenopus laevis</name>
    <name type="common">African clawed frog</name>
    <dbReference type="NCBI Taxonomy" id="8355"/>
    <lineage>
        <taxon>Eukaryota</taxon>
        <taxon>Metazoa</taxon>
        <taxon>Chordata</taxon>
        <taxon>Craniata</taxon>
        <taxon>Vertebrata</taxon>
        <taxon>Euteleostomi</taxon>
        <taxon>Amphibia</taxon>
        <taxon>Batrachia</taxon>
        <taxon>Anura</taxon>
        <taxon>Pipoidea</taxon>
        <taxon>Pipidae</taxon>
        <taxon>Xenopodinae</taxon>
        <taxon>Xenopus</taxon>
        <taxon>Xenopus</taxon>
    </lineage>
</organism>
<feature type="chain" id="PRO_0000248850" description="Deleted in azoospermia-like-B">
    <location>
        <begin position="1"/>
        <end position="286"/>
    </location>
</feature>
<feature type="domain" description="RRM" evidence="3">
    <location>
        <begin position="33"/>
        <end position="114"/>
    </location>
</feature>
<feature type="domain" description="DAZ" evidence="4">
    <location>
        <begin position="155"/>
        <end position="180"/>
    </location>
</feature>
<sequence>MSGKEESSNYAATAEEEAVNQGFVLPEGKIMPNTVFVGGIDITMDEIEIRDFFTRFGNVKEVKIITDRTGVSKGYGFISFSDEVDIQKIVKSQISFHGKKLKLGPAIRKICTYVQPRPVVLSHPTPFHHAWNNQNADSYIQHSPIVSPITQYVQACPYPSSPPMAIQQIPVGCQQPGYFQVSPQWPADQRSYMFPTPAFTFNYHCCDMDPNGGEPIPREYPIDQTVSASGANPQKRYVEMSTQTIVSCLFDPANKFHSFVSQEDYLKDNRVHHLRRRESVIKRVSK</sequence>
<protein>
    <recommendedName>
        <fullName>Deleted in azoospermia-like-B</fullName>
        <shortName>DAZ-like protein B</shortName>
        <shortName>xDazl-B</shortName>
    </recommendedName>
</protein>
<dbReference type="EMBL" id="BC071023">
    <property type="protein sequence ID" value="AAH71023.1"/>
    <property type="status" value="ALT_INIT"/>
    <property type="molecule type" value="mRNA"/>
</dbReference>
<dbReference type="EMBL" id="BC097658">
    <property type="protein sequence ID" value="AAH97658.1"/>
    <property type="status" value="ALT_INIT"/>
    <property type="molecule type" value="mRNA"/>
</dbReference>
<dbReference type="SMR" id="Q4V7Y4"/>
<dbReference type="AGR" id="Xenbase:XB-GENE-6078612"/>
<dbReference type="Xenbase" id="XB-GENE-6078612">
    <property type="gene designation" value="dazl.L"/>
</dbReference>
<dbReference type="Proteomes" id="UP000186698">
    <property type="component" value="Unplaced"/>
</dbReference>
<dbReference type="GO" id="GO:0005737">
    <property type="term" value="C:cytoplasm"/>
    <property type="evidence" value="ECO:0000250"/>
    <property type="project" value="UniProtKB"/>
</dbReference>
<dbReference type="GO" id="GO:0032019">
    <property type="term" value="C:mitochondrial cloud"/>
    <property type="evidence" value="ECO:0000250"/>
    <property type="project" value="UniProtKB"/>
</dbReference>
<dbReference type="GO" id="GO:0003730">
    <property type="term" value="F:mRNA 3'-UTR binding"/>
    <property type="evidence" value="ECO:0000318"/>
    <property type="project" value="GO_Central"/>
</dbReference>
<dbReference type="GO" id="GO:0003723">
    <property type="term" value="F:RNA binding"/>
    <property type="evidence" value="ECO:0000250"/>
    <property type="project" value="UniProtKB"/>
</dbReference>
<dbReference type="GO" id="GO:0008494">
    <property type="term" value="F:translation activator activity"/>
    <property type="evidence" value="ECO:0000250"/>
    <property type="project" value="UniProtKB"/>
</dbReference>
<dbReference type="GO" id="GO:0070935">
    <property type="term" value="P:3'-UTR-mediated mRNA stabilization"/>
    <property type="evidence" value="ECO:0000318"/>
    <property type="project" value="GO_Central"/>
</dbReference>
<dbReference type="GO" id="GO:0007281">
    <property type="term" value="P:germ cell development"/>
    <property type="evidence" value="ECO:0000250"/>
    <property type="project" value="UniProtKB"/>
</dbReference>
<dbReference type="GO" id="GO:0008354">
    <property type="term" value="P:germ cell migration"/>
    <property type="evidence" value="ECO:0000250"/>
    <property type="project" value="UniProtKB"/>
</dbReference>
<dbReference type="GO" id="GO:0048477">
    <property type="term" value="P:oogenesis"/>
    <property type="evidence" value="ECO:0007669"/>
    <property type="project" value="UniProtKB-KW"/>
</dbReference>
<dbReference type="GO" id="GO:0045948">
    <property type="term" value="P:positive regulation of translational initiation"/>
    <property type="evidence" value="ECO:0000250"/>
    <property type="project" value="UniProtKB"/>
</dbReference>
<dbReference type="GO" id="GO:0007283">
    <property type="term" value="P:spermatogenesis"/>
    <property type="evidence" value="ECO:0007669"/>
    <property type="project" value="UniProtKB-KW"/>
</dbReference>
<dbReference type="CDD" id="cd12672">
    <property type="entry name" value="RRM_DAZL"/>
    <property type="match status" value="1"/>
</dbReference>
<dbReference type="FunFam" id="3.30.70.330:FF:000180">
    <property type="entry name" value="Deleted in azoospermia-like"/>
    <property type="match status" value="1"/>
</dbReference>
<dbReference type="Gene3D" id="3.30.70.330">
    <property type="match status" value="1"/>
</dbReference>
<dbReference type="InterPro" id="IPR043628">
    <property type="entry name" value="DAZ_dom"/>
</dbReference>
<dbReference type="InterPro" id="IPR037551">
    <property type="entry name" value="DAZ_RRM_vert"/>
</dbReference>
<dbReference type="InterPro" id="IPR012677">
    <property type="entry name" value="Nucleotide-bd_a/b_plait_sf"/>
</dbReference>
<dbReference type="InterPro" id="IPR035979">
    <property type="entry name" value="RBD_domain_sf"/>
</dbReference>
<dbReference type="InterPro" id="IPR000504">
    <property type="entry name" value="RRM_dom"/>
</dbReference>
<dbReference type="PANTHER" id="PTHR11176">
    <property type="entry name" value="BOULE-RELATED"/>
    <property type="match status" value="1"/>
</dbReference>
<dbReference type="PANTHER" id="PTHR11176:SF4">
    <property type="entry name" value="DELETED IN AZOOSPERMIA-LIKE"/>
    <property type="match status" value="1"/>
</dbReference>
<dbReference type="Pfam" id="PF00076">
    <property type="entry name" value="RRM_1"/>
    <property type="match status" value="1"/>
</dbReference>
<dbReference type="SMART" id="SM00360">
    <property type="entry name" value="RRM"/>
    <property type="match status" value="1"/>
</dbReference>
<dbReference type="SUPFAM" id="SSF54928">
    <property type="entry name" value="RNA-binding domain, RBD"/>
    <property type="match status" value="1"/>
</dbReference>
<dbReference type="PROSITE" id="PS51890">
    <property type="entry name" value="DAZ"/>
    <property type="match status" value="1"/>
</dbReference>
<dbReference type="PROSITE" id="PS50102">
    <property type="entry name" value="RRM"/>
    <property type="match status" value="1"/>
</dbReference>
<evidence type="ECO:0000250" key="1"/>
<evidence type="ECO:0000250" key="2">
    <source>
        <dbReference type="UniProtKB" id="O57437"/>
    </source>
</evidence>
<evidence type="ECO:0000255" key="3">
    <source>
        <dbReference type="PROSITE-ProRule" id="PRU00176"/>
    </source>
</evidence>
<evidence type="ECO:0000255" key="4">
    <source>
        <dbReference type="PROSITE-ProRule" id="PRU01238"/>
    </source>
</evidence>
<evidence type="ECO:0000305" key="5"/>
<evidence type="ECO:0000312" key="6">
    <source>
        <dbReference type="EMBL" id="AAH71023.1"/>
    </source>
</evidence>
<evidence type="ECO:0000312" key="7">
    <source>
        <dbReference type="EMBL" id="AAH97658.1"/>
    </source>
</evidence>
<comment type="function">
    <text evidence="1">RNA-binding protein that is required for primordial germ cell (PGC) differentiation and indirectly necessary for the migration of PGCs through the endoderm. May promote meiotic cell division during spermatogenesis. Shows a preference for G- and U-rich RNAs and probably binds the 3'-UTR of target mRNAs. Stimulates the initiation of translation of mRNAs through the recruitment of poly(A)-binding proteins (PABPs) (By similarity).</text>
</comment>
<comment type="subunit">
    <text evidence="2">Interacts with the C-terminus of pabp1 and with epabp. Prior to oocyte maturation, found in a complex with epabp and pum2 proteins and spdy1 mRNA; pum2 dissociates from the complex during maturation (By similarity).</text>
</comment>
<comment type="subcellular location">
    <subcellularLocation>
        <location evidence="2">Cytoplasm</location>
    </subcellularLocation>
</comment>
<comment type="similarity">
    <text evidence="4">Belongs to the RRM DAZ family.</text>
</comment>
<comment type="sequence caution" evidence="5">
    <conflict type="erroneous initiation">
        <sequence resource="EMBL-CDS" id="AAH71023"/>
    </conflict>
</comment>
<comment type="sequence caution" evidence="5">
    <conflict type="erroneous initiation">
        <sequence resource="EMBL-CDS" id="AAH97658"/>
    </conflict>
</comment>
<keyword id="KW-0963">Cytoplasm</keyword>
<keyword id="KW-0217">Developmental protein</keyword>
<keyword id="KW-0221">Differentiation</keyword>
<keyword id="KW-0896">Oogenesis</keyword>
<keyword id="KW-1185">Reference proteome</keyword>
<keyword id="KW-0694">RNA-binding</keyword>
<keyword id="KW-0744">Spermatogenesis</keyword>
<keyword id="KW-0810">Translation regulation</keyword>
<reference evidence="7" key="1">
    <citation type="submission" date="2005-06" db="EMBL/GenBank/DDBJ databases">
        <authorList>
            <consortium name="NIH - Xenopus Gene Collection (XGC) project"/>
        </authorList>
    </citation>
    <scope>NUCLEOTIDE SEQUENCE [LARGE SCALE MRNA]</scope>
    <source>
        <tissue evidence="6">Kidney</tissue>
        <tissue evidence="7">Ovary</tissue>
    </source>
</reference>
<proteinExistence type="evidence at transcript level"/>